<sequence>MTQMSQVQELFHEAAQQDALAQPQPWWKTQLFMWEPVLFGTWDGVFTSCMINIFGVVLFLRTGWLVGNTGVLLGMFLVSFVILVALVTVLSGIGVGERSSIGSGGVYSMISSVLGGQTGGTIGLLYVFGQCVAGAMYITGFAESISDLLGLGNIWAVRGISVAVLLALLGINLAGVKWIIRLQLLLLFLLAVSTLDFVVGSFTHLDPEHGFIGYSPELLQNNTLPDYSPGESFFTVFGVFFPAATGVMAGFNMGGDLREPAASIPLGSLAAVGISWFLYIIFVFLLGAICTREALRYDFLIAEKVSLMGFLFLLGLYISSLASCMGGLYGAPRILQCIAQEKVIPALACLGQGKGPNKTPVAAICLTSLVTMAFVFVGQVNVLAPIVTINFMLTYVAVDYSYFSLSMCSCSLTPVPEPVLREGAEGLHCSEHLLLEKAPSYGSEGPAQRVLEGTLLEFTKDMDQLLQLTRKLESSQPRQGEGNRTPESQKRKSKKATKQTLQDSFLLDLKSPPSFPVEISDRLPAASWEGQESCWNKQTSKSEGTQPEGTYGEQLVPELCNQSESSGEDFFLKSRLQEQDVWRRSTSFYTHMCNPWVSLLGAVGSLLIMFVIQWVYTLVNMGVAAIVYFYIGRASPGLHLGSASNFSFFRWMRSLLLPSCRSLRSPQEQIILAPSLAKVDMEMTQLTQENADFATRDRYHHSSLVNREQLMPHY</sequence>
<protein>
    <recommendedName>
        <fullName>Solute carrier family 12 member 8</fullName>
    </recommendedName>
    <alternativeName>
        <fullName>Cation-chloride cotransporter 9</fullName>
    </alternativeName>
</protein>
<reference key="1">
    <citation type="journal article" date="2002" name="Genomics">
        <title>Identification of a psoriasis susceptibility candidate gene by linkage disequilibrium mapping with a localized single nucleotide polymorphism map.</title>
        <authorList>
            <person name="Hewett D."/>
            <person name="Samuelsson L."/>
            <person name="Polding J."/>
            <person name="Enlund F."/>
            <person name="Smart D."/>
            <person name="Cantone K."/>
            <person name="See C.G."/>
            <person name="Chadha S."/>
            <person name="Inerot A."/>
            <person name="Enerback C."/>
            <person name="Montgomery D."/>
            <person name="Christodolou C."/>
            <person name="Robinson P."/>
            <person name="Matthews P."/>
            <person name="Plumpton M."/>
            <person name="Wahlstrom J."/>
            <person name="Swanbeck G."/>
            <person name="Martinsson T."/>
            <person name="Roses A."/>
            <person name="Riley J."/>
            <person name="Purvis I."/>
        </authorList>
    </citation>
    <scope>NUCLEOTIDE SEQUENCE [MRNA] (ISOFORM 1)</scope>
    <scope>SUSCEPTIBILITY TO PSORIASIS</scope>
    <scope>FUNCTION</scope>
    <scope>TISSUE SPECIFICITY</scope>
    <scope>VARIANTS CYS-181 AND VAL-281</scope>
</reference>
<reference key="2">
    <citation type="submission" date="2001-02" db="EMBL/GenBank/DDBJ databases">
        <title>Characterization of Homo sapiens CCC9, a novel member of the cation-chloride cotransporter gene family.</title>
        <authorList>
            <person name="Mount D.B."/>
        </authorList>
    </citation>
    <scope>NUCLEOTIDE SEQUENCE [MRNA] (ISOFORM 1)</scope>
    <scope>VARIANTS VAL-281 AND GLN-664</scope>
</reference>
<reference key="3">
    <citation type="journal article" date="2004" name="Nat. Genet.">
        <title>Complete sequencing and characterization of 21,243 full-length human cDNAs.</title>
        <authorList>
            <person name="Ota T."/>
            <person name="Suzuki Y."/>
            <person name="Nishikawa T."/>
            <person name="Otsuki T."/>
            <person name="Sugiyama T."/>
            <person name="Irie R."/>
            <person name="Wakamatsu A."/>
            <person name="Hayashi K."/>
            <person name="Sato H."/>
            <person name="Nagai K."/>
            <person name="Kimura K."/>
            <person name="Makita H."/>
            <person name="Sekine M."/>
            <person name="Obayashi M."/>
            <person name="Nishi T."/>
            <person name="Shibahara T."/>
            <person name="Tanaka T."/>
            <person name="Ishii S."/>
            <person name="Yamamoto J."/>
            <person name="Saito K."/>
            <person name="Kawai Y."/>
            <person name="Isono Y."/>
            <person name="Nakamura Y."/>
            <person name="Nagahari K."/>
            <person name="Murakami K."/>
            <person name="Yasuda T."/>
            <person name="Iwayanagi T."/>
            <person name="Wagatsuma M."/>
            <person name="Shiratori A."/>
            <person name="Sudo H."/>
            <person name="Hosoiri T."/>
            <person name="Kaku Y."/>
            <person name="Kodaira H."/>
            <person name="Kondo H."/>
            <person name="Sugawara M."/>
            <person name="Takahashi M."/>
            <person name="Kanda K."/>
            <person name="Yokoi T."/>
            <person name="Furuya T."/>
            <person name="Kikkawa E."/>
            <person name="Omura Y."/>
            <person name="Abe K."/>
            <person name="Kamihara K."/>
            <person name="Katsuta N."/>
            <person name="Sato K."/>
            <person name="Tanikawa M."/>
            <person name="Yamazaki M."/>
            <person name="Ninomiya K."/>
            <person name="Ishibashi T."/>
            <person name="Yamashita H."/>
            <person name="Murakawa K."/>
            <person name="Fujimori K."/>
            <person name="Tanai H."/>
            <person name="Kimata M."/>
            <person name="Watanabe M."/>
            <person name="Hiraoka S."/>
            <person name="Chiba Y."/>
            <person name="Ishida S."/>
            <person name="Ono Y."/>
            <person name="Takiguchi S."/>
            <person name="Watanabe S."/>
            <person name="Yosida M."/>
            <person name="Hotuta T."/>
            <person name="Kusano J."/>
            <person name="Kanehori K."/>
            <person name="Takahashi-Fujii A."/>
            <person name="Hara H."/>
            <person name="Tanase T.-O."/>
            <person name="Nomura Y."/>
            <person name="Togiya S."/>
            <person name="Komai F."/>
            <person name="Hara R."/>
            <person name="Takeuchi K."/>
            <person name="Arita M."/>
            <person name="Imose N."/>
            <person name="Musashino K."/>
            <person name="Yuuki H."/>
            <person name="Oshima A."/>
            <person name="Sasaki N."/>
            <person name="Aotsuka S."/>
            <person name="Yoshikawa Y."/>
            <person name="Matsunawa H."/>
            <person name="Ichihara T."/>
            <person name="Shiohata N."/>
            <person name="Sano S."/>
            <person name="Moriya S."/>
            <person name="Momiyama H."/>
            <person name="Satoh N."/>
            <person name="Takami S."/>
            <person name="Terashima Y."/>
            <person name="Suzuki O."/>
            <person name="Nakagawa S."/>
            <person name="Senoh A."/>
            <person name="Mizoguchi H."/>
            <person name="Goto Y."/>
            <person name="Shimizu F."/>
            <person name="Wakebe H."/>
            <person name="Hishigaki H."/>
            <person name="Watanabe T."/>
            <person name="Sugiyama A."/>
            <person name="Takemoto M."/>
            <person name="Kawakami B."/>
            <person name="Yamazaki M."/>
            <person name="Watanabe K."/>
            <person name="Kumagai A."/>
            <person name="Itakura S."/>
            <person name="Fukuzumi Y."/>
            <person name="Fujimori Y."/>
            <person name="Komiyama M."/>
            <person name="Tashiro H."/>
            <person name="Tanigami A."/>
            <person name="Fujiwara T."/>
            <person name="Ono T."/>
            <person name="Yamada K."/>
            <person name="Fujii Y."/>
            <person name="Ozaki K."/>
            <person name="Hirao M."/>
            <person name="Ohmori Y."/>
            <person name="Kawabata A."/>
            <person name="Hikiji T."/>
            <person name="Kobatake N."/>
            <person name="Inagaki H."/>
            <person name="Ikema Y."/>
            <person name="Okamoto S."/>
            <person name="Okitani R."/>
            <person name="Kawakami T."/>
            <person name="Noguchi S."/>
            <person name="Itoh T."/>
            <person name="Shigeta K."/>
            <person name="Senba T."/>
            <person name="Matsumura K."/>
            <person name="Nakajima Y."/>
            <person name="Mizuno T."/>
            <person name="Morinaga M."/>
            <person name="Sasaki M."/>
            <person name="Togashi T."/>
            <person name="Oyama M."/>
            <person name="Hata H."/>
            <person name="Watanabe M."/>
            <person name="Komatsu T."/>
            <person name="Mizushima-Sugano J."/>
            <person name="Satoh T."/>
            <person name="Shirai Y."/>
            <person name="Takahashi Y."/>
            <person name="Nakagawa K."/>
            <person name="Okumura K."/>
            <person name="Nagase T."/>
            <person name="Nomura N."/>
            <person name="Kikuchi H."/>
            <person name="Masuho Y."/>
            <person name="Yamashita R."/>
            <person name="Nakai K."/>
            <person name="Yada T."/>
            <person name="Nakamura Y."/>
            <person name="Ohara O."/>
            <person name="Isogai T."/>
            <person name="Sugano S."/>
        </authorList>
    </citation>
    <scope>NUCLEOTIDE SEQUENCE [LARGE SCALE MRNA] (ISOFORM 5)</scope>
    <source>
        <tissue>Lung</tissue>
    </source>
</reference>
<reference key="4">
    <citation type="journal article" date="2007" name="BMC Genomics">
        <title>The full-ORF clone resource of the German cDNA consortium.</title>
        <authorList>
            <person name="Bechtel S."/>
            <person name="Rosenfelder H."/>
            <person name="Duda A."/>
            <person name="Schmidt C.P."/>
            <person name="Ernst U."/>
            <person name="Wellenreuther R."/>
            <person name="Mehrle A."/>
            <person name="Schuster C."/>
            <person name="Bahr A."/>
            <person name="Bloecker H."/>
            <person name="Heubner D."/>
            <person name="Hoerlein A."/>
            <person name="Michel G."/>
            <person name="Wedler H."/>
            <person name="Koehrer K."/>
            <person name="Ottenwaelder B."/>
            <person name="Poustka A."/>
            <person name="Wiemann S."/>
            <person name="Schupp I."/>
        </authorList>
    </citation>
    <scope>NUCLEOTIDE SEQUENCE [LARGE SCALE MRNA] (ISOFORMS 2 AND 3)</scope>
    <source>
        <tissue>Endometrial adenocarcinoma</tissue>
        <tissue>Salivary gland</tissue>
    </source>
</reference>
<reference key="5">
    <citation type="journal article" date="2006" name="Nature">
        <title>The DNA sequence, annotation and analysis of human chromosome 3.</title>
        <authorList>
            <person name="Muzny D.M."/>
            <person name="Scherer S.E."/>
            <person name="Kaul R."/>
            <person name="Wang J."/>
            <person name="Yu J."/>
            <person name="Sudbrak R."/>
            <person name="Buhay C.J."/>
            <person name="Chen R."/>
            <person name="Cree A."/>
            <person name="Ding Y."/>
            <person name="Dugan-Rocha S."/>
            <person name="Gill R."/>
            <person name="Gunaratne P."/>
            <person name="Harris R.A."/>
            <person name="Hawes A.C."/>
            <person name="Hernandez J."/>
            <person name="Hodgson A.V."/>
            <person name="Hume J."/>
            <person name="Jackson A."/>
            <person name="Khan Z.M."/>
            <person name="Kovar-Smith C."/>
            <person name="Lewis L.R."/>
            <person name="Lozado R.J."/>
            <person name="Metzker M.L."/>
            <person name="Milosavljevic A."/>
            <person name="Miner G.R."/>
            <person name="Morgan M.B."/>
            <person name="Nazareth L.V."/>
            <person name="Scott G."/>
            <person name="Sodergren E."/>
            <person name="Song X.-Z."/>
            <person name="Steffen D."/>
            <person name="Wei S."/>
            <person name="Wheeler D.A."/>
            <person name="Wright M.W."/>
            <person name="Worley K.C."/>
            <person name="Yuan Y."/>
            <person name="Zhang Z."/>
            <person name="Adams C.Q."/>
            <person name="Ansari-Lari M.A."/>
            <person name="Ayele M."/>
            <person name="Brown M.J."/>
            <person name="Chen G."/>
            <person name="Chen Z."/>
            <person name="Clendenning J."/>
            <person name="Clerc-Blankenburg K.P."/>
            <person name="Chen R."/>
            <person name="Chen Z."/>
            <person name="Davis C."/>
            <person name="Delgado O."/>
            <person name="Dinh H.H."/>
            <person name="Dong W."/>
            <person name="Draper H."/>
            <person name="Ernst S."/>
            <person name="Fu G."/>
            <person name="Gonzalez-Garay M.L."/>
            <person name="Garcia D.K."/>
            <person name="Gillett W."/>
            <person name="Gu J."/>
            <person name="Hao B."/>
            <person name="Haugen E."/>
            <person name="Havlak P."/>
            <person name="He X."/>
            <person name="Hennig S."/>
            <person name="Hu S."/>
            <person name="Huang W."/>
            <person name="Jackson L.R."/>
            <person name="Jacob L.S."/>
            <person name="Kelly S.H."/>
            <person name="Kube M."/>
            <person name="Levy R."/>
            <person name="Li Z."/>
            <person name="Liu B."/>
            <person name="Liu J."/>
            <person name="Liu W."/>
            <person name="Lu J."/>
            <person name="Maheshwari M."/>
            <person name="Nguyen B.-V."/>
            <person name="Okwuonu G.O."/>
            <person name="Palmeiri A."/>
            <person name="Pasternak S."/>
            <person name="Perez L.M."/>
            <person name="Phelps K.A."/>
            <person name="Plopper F.J."/>
            <person name="Qiang B."/>
            <person name="Raymond C."/>
            <person name="Rodriguez R."/>
            <person name="Saenphimmachak C."/>
            <person name="Santibanez J."/>
            <person name="Shen H."/>
            <person name="Shen Y."/>
            <person name="Subramanian S."/>
            <person name="Tabor P.E."/>
            <person name="Verduzco D."/>
            <person name="Waldron L."/>
            <person name="Wang J."/>
            <person name="Wang J."/>
            <person name="Wang Q."/>
            <person name="Williams G.A."/>
            <person name="Wong G.K.-S."/>
            <person name="Yao Z."/>
            <person name="Zhang J."/>
            <person name="Zhang X."/>
            <person name="Zhao G."/>
            <person name="Zhou J."/>
            <person name="Zhou Y."/>
            <person name="Nelson D."/>
            <person name="Lehrach H."/>
            <person name="Reinhardt R."/>
            <person name="Naylor S.L."/>
            <person name="Yang H."/>
            <person name="Olson M."/>
            <person name="Weinstock G."/>
            <person name="Gibbs R.A."/>
        </authorList>
    </citation>
    <scope>NUCLEOTIDE SEQUENCE [LARGE SCALE GENOMIC DNA]</scope>
</reference>
<reference key="6">
    <citation type="journal article" date="2004" name="Genome Res.">
        <title>The status, quality, and expansion of the NIH full-length cDNA project: the Mammalian Gene Collection (MGC).</title>
        <authorList>
            <consortium name="The MGC Project Team"/>
        </authorList>
    </citation>
    <scope>NUCLEOTIDE SEQUENCE [LARGE SCALE MRNA] (ISOFORMS 1 AND 4)</scope>
    <scope>VARIANT VAL-281</scope>
    <source>
        <tissue>Colon</tissue>
        <tissue>Lymph</tissue>
    </source>
</reference>
<reference key="7">
    <citation type="submission" date="2004-06" db="EMBL/GenBank/DDBJ databases">
        <title>Cloning of human full open reading frames in Gateway(TM) system entry vector (pDONR201).</title>
        <authorList>
            <person name="Ebert L."/>
            <person name="Schick M."/>
            <person name="Neubert P."/>
            <person name="Schatten R."/>
            <person name="Henze S."/>
            <person name="Korn B."/>
        </authorList>
    </citation>
    <scope>NUCLEOTIDE SEQUENCE [LARGE SCALE MRNA] OF 407-714 (ISOFORM 1)</scope>
</reference>
<reference key="8">
    <citation type="journal article" date="2005" name="J. Invest. Dermatol.">
        <title>Systematic linkage disequilibrium analysis of SLC12A8 at PSORS5 confirms a role in susceptibility to psoriasis vulgaris.</title>
        <authorList>
            <person name="Hueffmeier U."/>
            <person name="Lascorz J."/>
            <person name="Traupe H."/>
            <person name="Boehm B."/>
            <person name="Schuermeier-Horst F."/>
            <person name="Staender M."/>
            <person name="Kelsch R."/>
            <person name="Baumann C."/>
            <person name="Kuester W."/>
            <person name="Burkhardt H."/>
            <person name="Reis A."/>
        </authorList>
    </citation>
    <scope>SUSCEPTIBILITY TO PSORIASIS</scope>
</reference>
<keyword id="KW-0025">Alternative splicing</keyword>
<keyword id="KW-0868">Chloride</keyword>
<keyword id="KW-0325">Glycoprotein</keyword>
<keyword id="KW-0406">Ion transport</keyword>
<keyword id="KW-0472">Membrane</keyword>
<keyword id="KW-0630">Potassium</keyword>
<keyword id="KW-0633">Potassium transport</keyword>
<keyword id="KW-1267">Proteomics identification</keyword>
<keyword id="KW-1185">Reference proteome</keyword>
<keyword id="KW-0769">Symport</keyword>
<keyword id="KW-0812">Transmembrane</keyword>
<keyword id="KW-1133">Transmembrane helix</keyword>
<keyword id="KW-0813">Transport</keyword>
<proteinExistence type="evidence at protein level"/>
<organism>
    <name type="scientific">Homo sapiens</name>
    <name type="common">Human</name>
    <dbReference type="NCBI Taxonomy" id="9606"/>
    <lineage>
        <taxon>Eukaryota</taxon>
        <taxon>Metazoa</taxon>
        <taxon>Chordata</taxon>
        <taxon>Craniata</taxon>
        <taxon>Vertebrata</taxon>
        <taxon>Euteleostomi</taxon>
        <taxon>Mammalia</taxon>
        <taxon>Eutheria</taxon>
        <taxon>Euarchontoglires</taxon>
        <taxon>Primates</taxon>
        <taxon>Haplorrhini</taxon>
        <taxon>Catarrhini</taxon>
        <taxon>Hominidae</taxon>
        <taxon>Homo</taxon>
    </lineage>
</organism>
<name>S12A8_HUMAN</name>
<evidence type="ECO:0000255" key="1"/>
<evidence type="ECO:0000256" key="2">
    <source>
        <dbReference type="SAM" id="MobiDB-lite"/>
    </source>
</evidence>
<evidence type="ECO:0000269" key="3">
    <source>
    </source>
</evidence>
<evidence type="ECO:0000269" key="4">
    <source>
    </source>
</evidence>
<evidence type="ECO:0000269" key="5">
    <source ref="2"/>
</evidence>
<evidence type="ECO:0000303" key="6">
    <source>
    </source>
</evidence>
<evidence type="ECO:0000303" key="7">
    <source>
    </source>
</evidence>
<evidence type="ECO:0000303" key="8">
    <source>
    </source>
</evidence>
<evidence type="ECO:0000305" key="9"/>
<accession>A0AV02</accession>
<accession>C9JJJ2</accession>
<accession>Q68D04</accession>
<accession>Q6I9Z2</accession>
<accession>Q6P4C0</accession>
<accession>Q7Z3A6</accession>
<accession>Q86WK0</accession>
<accession>Q8NFX9</accession>
<accession>Q8WUI3</accession>
<accession>Q96RF9</accession>
<accession>Q9H5P9</accession>
<comment type="function">
    <text evidence="3">Cation/chloride cotransporter that may play a role in the control of keratinocyte proliferation.</text>
</comment>
<comment type="interaction">
    <interactant intactId="EBI-11737524">
        <id>A0AV02</id>
    </interactant>
    <interactant intactId="EBI-747278">
        <id>P26367</id>
        <label>PAX6</label>
    </interactant>
    <organismsDiffer>false</organismsDiffer>
    <experiments>3</experiments>
</comment>
<comment type="subcellular location">
    <subcellularLocation>
        <location evidence="9">Membrane</location>
        <topology evidence="9">Multi-pass membrane protein</topology>
    </subcellularLocation>
</comment>
<comment type="alternative products">
    <event type="alternative splicing"/>
    <isoform>
        <id>A0AV02-1</id>
        <name>1</name>
        <sequence type="displayed"/>
    </isoform>
    <isoform>
        <id>A0AV02-2</id>
        <name>2</name>
        <sequence type="described" ref="VSP_028330"/>
    </isoform>
    <isoform>
        <id>A0AV02-3</id>
        <name>3</name>
        <sequence type="described" ref="VSP_028329 VSP_028331"/>
    </isoform>
    <isoform>
        <id>A0AV02-4</id>
        <name>4</name>
        <sequence type="described" ref="VSP_028328 VSP_028332"/>
    </isoform>
    <isoform>
        <id>A0AV02-5</id>
        <name>5</name>
        <sequence type="described" ref="VSP_028327"/>
    </isoform>
</comment>
<comment type="tissue specificity">
    <text evidence="3">Ubiquitous with very low level in normal skin.</text>
</comment>
<comment type="disease">
    <text>SLC12A8 has been identified as a possible susceptibility gene for psoriasis mapped to chromosome 3q21 (PSORS5).</text>
</comment>
<comment type="similarity">
    <text evidence="9">Belongs to the SLC12A transporter family.</text>
</comment>
<comment type="sequence caution" evidence="9">
    <conflict type="erroneous initiation">
        <sequence resource="EMBL-CDS" id="AAH20506"/>
    </conflict>
    <text>Truncated N-terminus.</text>
</comment>
<comment type="sequence caution" evidence="9">
    <conflict type="erroneous initiation">
        <sequence resource="EMBL-CDS" id="AAH63528"/>
    </conflict>
    <text>Truncated N-terminus.</text>
</comment>
<comment type="sequence caution" evidence="9">
    <conflict type="frameshift">
        <sequence resource="EMBL-CDS" id="AAH63528"/>
    </conflict>
</comment>
<comment type="sequence caution" evidence="9">
    <conflict type="erroneous gene model prediction">
        <sequence resource="EMBL-CDS" id="AAK94307"/>
    </conflict>
</comment>
<comment type="sequence caution" evidence="9">
    <conflict type="erroneous initiation">
        <sequence resource="EMBL-CDS" id="AAM73657"/>
    </conflict>
    <text>Extended N-terminus.</text>
</comment>
<comment type="sequence caution" evidence="9">
    <conflict type="erroneous initiation">
        <sequence resource="EMBL-CDS" id="CAD97969"/>
    </conflict>
    <text>Extended N-terminus.</text>
</comment>
<feature type="chain" id="PRO_0000305287" description="Solute carrier family 12 member 8">
    <location>
        <begin position="1"/>
        <end position="714"/>
    </location>
</feature>
<feature type="transmembrane region" description="Helical" evidence="1">
    <location>
        <begin position="37"/>
        <end position="60"/>
    </location>
</feature>
<feature type="transmembrane region" description="Helical" evidence="1">
    <location>
        <begin position="72"/>
        <end position="93"/>
    </location>
</feature>
<feature type="transmembrane region" description="Helical" evidence="1">
    <location>
        <begin position="99"/>
        <end position="116"/>
    </location>
</feature>
<feature type="transmembrane region" description="Helical" evidence="1">
    <location>
        <begin position="123"/>
        <end position="142"/>
    </location>
</feature>
<feature type="transmembrane region" description="Helical" evidence="1">
    <location>
        <begin position="154"/>
        <end position="173"/>
    </location>
</feature>
<feature type="transmembrane region" description="Helical" evidence="1">
    <location>
        <begin position="185"/>
        <end position="205"/>
    </location>
</feature>
<feature type="transmembrane region" description="Helical" evidence="1">
    <location>
        <begin position="233"/>
        <end position="254"/>
    </location>
</feature>
<feature type="transmembrane region" description="Helical" evidence="1">
    <location>
        <begin position="266"/>
        <end position="289"/>
    </location>
</feature>
<feature type="transmembrane region" description="Helical" evidence="1">
    <location>
        <begin position="309"/>
        <end position="331"/>
    </location>
</feature>
<feature type="transmembrane region" description="Helical" evidence="1">
    <location>
        <begin position="360"/>
        <end position="377"/>
    </location>
</feature>
<feature type="transmembrane region" description="Helical" evidence="1">
    <location>
        <begin position="383"/>
        <end position="403"/>
    </location>
</feature>
<feature type="transmembrane region" description="Helical" evidence="1">
    <location>
        <begin position="593"/>
        <end position="616"/>
    </location>
</feature>
<feature type="transmembrane region" description="Helical" evidence="1">
    <location>
        <begin position="622"/>
        <end position="643"/>
    </location>
</feature>
<feature type="region of interest" description="Disordered" evidence="2">
    <location>
        <begin position="471"/>
        <end position="503"/>
    </location>
</feature>
<feature type="region of interest" description="Disordered" evidence="2">
    <location>
        <begin position="530"/>
        <end position="550"/>
    </location>
</feature>
<feature type="compositionally biased region" description="Polar residues" evidence="2">
    <location>
        <begin position="533"/>
        <end position="548"/>
    </location>
</feature>
<feature type="glycosylation site" description="N-linked (GlcNAc...) asparagine" evidence="1">
    <location>
        <position position="221"/>
    </location>
</feature>
<feature type="splice variant" id="VSP_028327" description="In isoform 5." evidence="6">
    <location>
        <begin position="1"/>
        <end position="406"/>
    </location>
</feature>
<feature type="splice variant" id="VSP_028328" description="In isoform 4." evidence="7">
    <location>
        <begin position="1"/>
        <end position="247"/>
    </location>
</feature>
<feature type="splice variant" id="VSP_028329" description="In isoform 3." evidence="8">
    <location>
        <begin position="1"/>
        <end position="199"/>
    </location>
</feature>
<feature type="splice variant" id="VSP_028330" description="In isoform 2." evidence="8">
    <original>MTQMSQVQELFHEAAQQ</original>
    <variation>MLPLERTITYRDMSSFIQVKNHFNVVNVTCVSYRSTCFRDMRRFIL</variation>
    <location>
        <begin position="1"/>
        <end position="17"/>
    </location>
</feature>
<feature type="splice variant" id="VSP_028331" description="In isoform 3." evidence="8">
    <original>GSFTHLDPEHGFIGYSPELLQNNTLPDYSPGESFFTVFGVFFPAAT</original>
    <variation>MRRAAAGGLAVGQLPGEGPAGEEGAALGKAMRGGGCSPHSPSGCLS</variation>
    <location>
        <begin position="200"/>
        <end position="245"/>
    </location>
</feature>
<feature type="splice variant" id="VSP_028332" description="In isoform 4." evidence="7">
    <original>DFFLKSRLQEQDVWRRSTSFYTHMCNPWVSLLGAVGSLLIMFVIQWVYTLVNMGVAAIVYFYIGRASPGLHLGSASNFSFFRWMRSLLLPSCR</original>
    <variation>G</variation>
    <location>
        <begin position="569"/>
        <end position="661"/>
    </location>
</feature>
<feature type="sequence variant" id="VAR_035199" description="In dbSNP:rs2993631." evidence="3">
    <original>R</original>
    <variation>C</variation>
    <location>
        <position position="181"/>
    </location>
</feature>
<feature type="sequence variant" id="VAR_035200" description="In dbSNP:rs863642.">
    <original>L</original>
    <variation>P</variation>
    <location>
        <position position="266"/>
    </location>
</feature>
<feature type="sequence variant" id="VAR_062148" description="In dbSNP:rs621383." evidence="3 4 5">
    <original>I</original>
    <variation>V</variation>
    <location>
        <position position="281"/>
    </location>
</feature>
<feature type="sequence variant" id="VAR_035201" description="In dbSNP:rs6773138.">
    <original>K</original>
    <variation>R</variation>
    <location>
        <position position="541"/>
    </location>
</feature>
<feature type="sequence variant" id="VAR_035202" description="In dbSNP:rs2981482." evidence="5">
    <original>R</original>
    <variation>Q</variation>
    <location>
        <position position="664"/>
    </location>
</feature>
<feature type="sequence conflict" description="In Ref. 4; CAH18426." evidence="9" ref="4">
    <original>S</original>
    <variation>P</variation>
    <location>
        <position position="111"/>
    </location>
</feature>
<feature type="sequence conflict" description="In Ref. 1; AAM73657." evidence="9" ref="1">
    <original>S</original>
    <variation>P</variation>
    <location>
        <position position="319"/>
    </location>
</feature>
<feature type="sequence conflict" description="In Ref. 6; CAG33644." evidence="9" ref="6">
    <original>L</original>
    <variation>P</variation>
    <location>
        <position position="433"/>
    </location>
</feature>
<feature type="sequence conflict" description="In Ref. 3; BAB15571." evidence="9" ref="3">
    <original>E</original>
    <variation>D</variation>
    <location>
        <position position="481"/>
    </location>
</feature>
<feature type="sequence conflict" description="In Ref. 4; CAH18426." evidence="9" ref="4">
    <original>P</original>
    <variation>L</variation>
    <location>
        <position position="512"/>
    </location>
</feature>
<feature type="sequence conflict" description="In Ref. 4; CAD97969." evidence="9" ref="4">
    <original>L</original>
    <variation>P</variation>
    <location>
        <position position="555"/>
    </location>
</feature>
<feature type="sequence conflict" description="In Ref. 2; AAO49174." evidence="9" ref="2">
    <original>R</original>
    <variation>H</variation>
    <location>
        <position position="698"/>
    </location>
</feature>
<dbReference type="EMBL" id="AF389851">
    <property type="protein sequence ID" value="AAK94307.1"/>
    <property type="status" value="ALT_SEQ"/>
    <property type="molecule type" value="Genomic_DNA"/>
</dbReference>
<dbReference type="EMBL" id="AF390442">
    <property type="protein sequence ID" value="AAM73657.1"/>
    <property type="status" value="ALT_INIT"/>
    <property type="molecule type" value="mRNA"/>
</dbReference>
<dbReference type="EMBL" id="AF345197">
    <property type="protein sequence ID" value="AAO49174.1"/>
    <property type="molecule type" value="mRNA"/>
</dbReference>
<dbReference type="EMBL" id="AK026841">
    <property type="protein sequence ID" value="BAB15571.1"/>
    <property type="molecule type" value="mRNA"/>
</dbReference>
<dbReference type="EMBL" id="BX538023">
    <property type="protein sequence ID" value="CAD97969.1"/>
    <property type="status" value="ALT_INIT"/>
    <property type="molecule type" value="mRNA"/>
</dbReference>
<dbReference type="EMBL" id="CR749632">
    <property type="protein sequence ID" value="CAH18426.1"/>
    <property type="molecule type" value="mRNA"/>
</dbReference>
<dbReference type="EMBL" id="AC055752">
    <property type="status" value="NOT_ANNOTATED_CDS"/>
    <property type="molecule type" value="Genomic_DNA"/>
</dbReference>
<dbReference type="EMBL" id="AC108688">
    <property type="status" value="NOT_ANNOTATED_CDS"/>
    <property type="molecule type" value="Genomic_DNA"/>
</dbReference>
<dbReference type="EMBL" id="AC117488">
    <property type="status" value="NOT_ANNOTATED_CDS"/>
    <property type="molecule type" value="Genomic_DNA"/>
</dbReference>
<dbReference type="EMBL" id="BC020506">
    <property type="protein sequence ID" value="AAH20506.1"/>
    <property type="status" value="ALT_INIT"/>
    <property type="molecule type" value="mRNA"/>
</dbReference>
<dbReference type="EMBL" id="BC063528">
    <property type="protein sequence ID" value="AAH63528.1"/>
    <property type="status" value="ALT_SEQ"/>
    <property type="molecule type" value="mRNA"/>
</dbReference>
<dbReference type="EMBL" id="BC126158">
    <property type="protein sequence ID" value="AAI26159.1"/>
    <property type="molecule type" value="mRNA"/>
</dbReference>
<dbReference type="EMBL" id="BC126160">
    <property type="protein sequence ID" value="AAI26161.1"/>
    <property type="molecule type" value="mRNA"/>
</dbReference>
<dbReference type="EMBL" id="CR457363">
    <property type="protein sequence ID" value="CAG33644.1"/>
    <property type="molecule type" value="mRNA"/>
</dbReference>
<dbReference type="CCDS" id="CCDS43143.1">
    <molecule id="A0AV02-1"/>
</dbReference>
<dbReference type="RefSeq" id="NP_001182412.2">
    <molecule id="A0AV02-1"/>
    <property type="nucleotide sequence ID" value="NM_001195483.2"/>
</dbReference>
<dbReference type="RefSeq" id="NP_078904.3">
    <molecule id="A0AV02-1"/>
    <property type="nucleotide sequence ID" value="NM_024628.5"/>
</dbReference>
<dbReference type="SMR" id="A0AV02"/>
<dbReference type="BioGRID" id="124140">
    <property type="interactions" value="15"/>
</dbReference>
<dbReference type="FunCoup" id="A0AV02">
    <property type="interactions" value="270"/>
</dbReference>
<dbReference type="IntAct" id="A0AV02">
    <property type="interactions" value="9"/>
</dbReference>
<dbReference type="MINT" id="A0AV02"/>
<dbReference type="STRING" id="9606.ENSP00000377112"/>
<dbReference type="TCDB" id="2.A.30.1.7">
    <property type="family name" value="the cation-chloride cotransporter (ccc) family"/>
</dbReference>
<dbReference type="GlyCosmos" id="A0AV02">
    <property type="glycosylation" value="1 site, No reported glycans"/>
</dbReference>
<dbReference type="GlyGen" id="A0AV02">
    <property type="glycosylation" value="1 site"/>
</dbReference>
<dbReference type="iPTMnet" id="A0AV02"/>
<dbReference type="PhosphoSitePlus" id="A0AV02"/>
<dbReference type="SwissPalm" id="A0AV02"/>
<dbReference type="BioMuta" id="SLC12A8"/>
<dbReference type="jPOST" id="A0AV02"/>
<dbReference type="MassIVE" id="A0AV02"/>
<dbReference type="PaxDb" id="9606-ENSP00000377112"/>
<dbReference type="PeptideAtlas" id="A0AV02"/>
<dbReference type="ProteomicsDB" id="10">
    <molecule id="A0AV02-2"/>
</dbReference>
<dbReference type="ProteomicsDB" id="11">
    <molecule id="A0AV02-3"/>
</dbReference>
<dbReference type="ProteomicsDB" id="12">
    <molecule id="A0AV02-4"/>
</dbReference>
<dbReference type="ProteomicsDB" id="13">
    <molecule id="A0AV02-5"/>
</dbReference>
<dbReference type="ProteomicsDB" id="9">
    <molecule id="A0AV02-1"/>
</dbReference>
<dbReference type="TopDownProteomics" id="A0AV02-3">
    <molecule id="A0AV02-3"/>
</dbReference>
<dbReference type="TopDownProteomics" id="A0AV02-5">
    <molecule id="A0AV02-5"/>
</dbReference>
<dbReference type="Antibodypedia" id="33008">
    <property type="antibodies" value="34 antibodies from 16 providers"/>
</dbReference>
<dbReference type="DNASU" id="84561"/>
<dbReference type="Ensembl" id="ENST00000393469.8">
    <molecule id="A0AV02-1"/>
    <property type="protein sequence ID" value="ENSP00000377112.4"/>
    <property type="gene ID" value="ENSG00000221955.11"/>
</dbReference>
<dbReference type="Ensembl" id="ENST00000430155.6">
    <molecule id="A0AV02-3"/>
    <property type="protein sequence ID" value="ENSP00000415713.2"/>
    <property type="gene ID" value="ENSG00000221955.11"/>
</dbReference>
<dbReference type="Ensembl" id="ENST00000469902.6">
    <molecule id="A0AV02-1"/>
    <property type="protein sequence ID" value="ENSP00000418783.1"/>
    <property type="gene ID" value="ENSG00000221955.11"/>
</dbReference>
<dbReference type="GeneID" id="84561"/>
<dbReference type="KEGG" id="hsa:84561"/>
<dbReference type="MANE-Select" id="ENST00000469902.6">
    <property type="protein sequence ID" value="ENSP00000418783.1"/>
    <property type="RefSeq nucleotide sequence ID" value="NM_024628.6"/>
    <property type="RefSeq protein sequence ID" value="NP_078904.4"/>
</dbReference>
<dbReference type="UCSC" id="uc003eht.4">
    <molecule id="A0AV02-1"/>
    <property type="organism name" value="human"/>
</dbReference>
<dbReference type="AGR" id="HGNC:15595"/>
<dbReference type="CTD" id="84561"/>
<dbReference type="DisGeNET" id="84561"/>
<dbReference type="GeneCards" id="SLC12A8"/>
<dbReference type="HGNC" id="HGNC:15595">
    <property type="gene designation" value="SLC12A8"/>
</dbReference>
<dbReference type="HPA" id="ENSG00000221955">
    <property type="expression patterns" value="Tissue enhanced (thyroid)"/>
</dbReference>
<dbReference type="MIM" id="611316">
    <property type="type" value="gene"/>
</dbReference>
<dbReference type="neXtProt" id="NX_A0AV02"/>
<dbReference type="OpenTargets" id="ENSG00000221955"/>
<dbReference type="PharmGKB" id="PA37991"/>
<dbReference type="VEuPathDB" id="HostDB:ENSG00000221955"/>
<dbReference type="eggNOG" id="KOG2083">
    <property type="taxonomic scope" value="Eukaryota"/>
</dbReference>
<dbReference type="GeneTree" id="ENSGT00940000160130"/>
<dbReference type="HOGENOM" id="CLU_017440_1_1_1"/>
<dbReference type="InParanoid" id="A0AV02"/>
<dbReference type="OMA" id="IMFIIQW"/>
<dbReference type="OrthoDB" id="2020542at2759"/>
<dbReference type="PAN-GO" id="A0AV02">
    <property type="GO annotations" value="6 GO annotations based on evolutionary models"/>
</dbReference>
<dbReference type="TreeFam" id="TF313191"/>
<dbReference type="PathwayCommons" id="A0AV02"/>
<dbReference type="SignaLink" id="A0AV02"/>
<dbReference type="BioGRID-ORCS" id="84561">
    <property type="hits" value="9 hits in 1142 CRISPR screens"/>
</dbReference>
<dbReference type="ChiTaRS" id="SLC12A8">
    <property type="organism name" value="human"/>
</dbReference>
<dbReference type="GeneWiki" id="SLC12A8"/>
<dbReference type="GenomeRNAi" id="84561"/>
<dbReference type="Pharos" id="A0AV02">
    <property type="development level" value="Tbio"/>
</dbReference>
<dbReference type="PRO" id="PR:A0AV02"/>
<dbReference type="Proteomes" id="UP000005640">
    <property type="component" value="Chromosome 3"/>
</dbReference>
<dbReference type="RNAct" id="A0AV02">
    <property type="molecule type" value="protein"/>
</dbReference>
<dbReference type="Bgee" id="ENSG00000221955">
    <property type="expression patterns" value="Expressed in right lobe of thyroid gland and 139 other cell types or tissues"/>
</dbReference>
<dbReference type="ExpressionAtlas" id="A0AV02">
    <property type="expression patterns" value="baseline and differential"/>
</dbReference>
<dbReference type="GO" id="GO:0016020">
    <property type="term" value="C:membrane"/>
    <property type="evidence" value="ECO:0007669"/>
    <property type="project" value="UniProtKB-SubCell"/>
</dbReference>
<dbReference type="GO" id="GO:0015379">
    <property type="term" value="F:potassium:chloride symporter activity"/>
    <property type="evidence" value="ECO:0000318"/>
    <property type="project" value="GO_Central"/>
</dbReference>
<dbReference type="GO" id="GO:0006884">
    <property type="term" value="P:cell volume homeostasis"/>
    <property type="evidence" value="ECO:0000318"/>
    <property type="project" value="GO_Central"/>
</dbReference>
<dbReference type="GO" id="GO:0055064">
    <property type="term" value="P:chloride ion homeostasis"/>
    <property type="evidence" value="ECO:0000318"/>
    <property type="project" value="GO_Central"/>
</dbReference>
<dbReference type="GO" id="GO:1902476">
    <property type="term" value="P:chloride transmembrane transport"/>
    <property type="evidence" value="ECO:0000318"/>
    <property type="project" value="GO_Central"/>
</dbReference>
<dbReference type="GO" id="GO:0055075">
    <property type="term" value="P:potassium ion homeostasis"/>
    <property type="evidence" value="ECO:0000318"/>
    <property type="project" value="GO_Central"/>
</dbReference>
<dbReference type="GO" id="GO:1990573">
    <property type="term" value="P:potassium ion import across plasma membrane"/>
    <property type="evidence" value="ECO:0000318"/>
    <property type="project" value="GO_Central"/>
</dbReference>
<dbReference type="FunFam" id="1.20.1740.10:FF:000030">
    <property type="entry name" value="solute carrier family 12 member 8"/>
    <property type="match status" value="1"/>
</dbReference>
<dbReference type="Gene3D" id="1.20.1740.10">
    <property type="entry name" value="Amino acid/polyamine transporter I"/>
    <property type="match status" value="1"/>
</dbReference>
<dbReference type="InterPro" id="IPR004841">
    <property type="entry name" value="AA-permease/SLC12A_dom"/>
</dbReference>
<dbReference type="InterPro" id="IPR004842">
    <property type="entry name" value="SLC12A_fam"/>
</dbReference>
<dbReference type="PANTHER" id="PTHR11827:SF6">
    <property type="entry name" value="SOLUTE CARRIER FAMILY 12 MEMBER 8"/>
    <property type="match status" value="1"/>
</dbReference>
<dbReference type="PANTHER" id="PTHR11827">
    <property type="entry name" value="SOLUTE CARRIER FAMILY 12, CATION COTRANSPORTERS"/>
    <property type="match status" value="1"/>
</dbReference>
<dbReference type="Pfam" id="PF00324">
    <property type="entry name" value="AA_permease"/>
    <property type="match status" value="1"/>
</dbReference>
<gene>
    <name type="primary">SLC12A8</name>
    <name type="synonym">CCC9</name>
</gene>